<keyword id="KW-0028">Amino-acid biosynthesis</keyword>
<keyword id="KW-0057">Aromatic amino acid biosynthesis</keyword>
<keyword id="KW-0413">Isomerase</keyword>
<keyword id="KW-0822">Tryptophan biosynthesis</keyword>
<reference key="1">
    <citation type="journal article" date="2003" name="Nat. Genet.">
        <title>Comparative analysis of the genome sequences of Bordetella pertussis, Bordetella parapertussis and Bordetella bronchiseptica.</title>
        <authorList>
            <person name="Parkhill J."/>
            <person name="Sebaihia M."/>
            <person name="Preston A."/>
            <person name="Murphy L.D."/>
            <person name="Thomson N.R."/>
            <person name="Harris D.E."/>
            <person name="Holden M.T.G."/>
            <person name="Churcher C.M."/>
            <person name="Bentley S.D."/>
            <person name="Mungall K.L."/>
            <person name="Cerdeno-Tarraga A.-M."/>
            <person name="Temple L."/>
            <person name="James K.D."/>
            <person name="Harris B."/>
            <person name="Quail M.A."/>
            <person name="Achtman M."/>
            <person name="Atkin R."/>
            <person name="Baker S."/>
            <person name="Basham D."/>
            <person name="Bason N."/>
            <person name="Cherevach I."/>
            <person name="Chillingworth T."/>
            <person name="Collins M."/>
            <person name="Cronin A."/>
            <person name="Davis P."/>
            <person name="Doggett J."/>
            <person name="Feltwell T."/>
            <person name="Goble A."/>
            <person name="Hamlin N."/>
            <person name="Hauser H."/>
            <person name="Holroyd S."/>
            <person name="Jagels K."/>
            <person name="Leather S."/>
            <person name="Moule S."/>
            <person name="Norberczak H."/>
            <person name="O'Neil S."/>
            <person name="Ormond D."/>
            <person name="Price C."/>
            <person name="Rabbinowitsch E."/>
            <person name="Rutter S."/>
            <person name="Sanders M."/>
            <person name="Saunders D."/>
            <person name="Seeger K."/>
            <person name="Sharp S."/>
            <person name="Simmonds M."/>
            <person name="Skelton J."/>
            <person name="Squares R."/>
            <person name="Squares S."/>
            <person name="Stevens K."/>
            <person name="Unwin L."/>
            <person name="Whitehead S."/>
            <person name="Barrell B.G."/>
            <person name="Maskell D.J."/>
        </authorList>
    </citation>
    <scope>NUCLEOTIDE SEQUENCE [LARGE SCALE GENOMIC DNA]</scope>
    <source>
        <strain>ATCC BAA-588 / NCTC 13252 / RB50</strain>
    </source>
</reference>
<sequence length="218" mass="23035">MRTRVKICGLTREQDIASAVQAGADAIGFVFYPASKRHVDPVRAAQLRREVPAFVDVVALFVNPRPDEVQAVLDHVAPDLLQFHGDETPQDCGRYGRRYLRAFRAGAPGLDSAAGLAAACRQYADAAGWLFDSYSAGYGGSGQGFDHGLLAGVQADPASRAIVLAGGLHPGNVADAVRAVRPWALDVSSGVEDAPGVKSADKIRQLMAAIKSVDQVAR</sequence>
<proteinExistence type="inferred from homology"/>
<accession>Q7WKG8</accession>
<organism>
    <name type="scientific">Bordetella bronchiseptica (strain ATCC BAA-588 / NCTC 13252 / RB50)</name>
    <name type="common">Alcaligenes bronchisepticus</name>
    <dbReference type="NCBI Taxonomy" id="257310"/>
    <lineage>
        <taxon>Bacteria</taxon>
        <taxon>Pseudomonadati</taxon>
        <taxon>Pseudomonadota</taxon>
        <taxon>Betaproteobacteria</taxon>
        <taxon>Burkholderiales</taxon>
        <taxon>Alcaligenaceae</taxon>
        <taxon>Bordetella</taxon>
    </lineage>
</organism>
<dbReference type="EC" id="5.3.1.24" evidence="1"/>
<dbReference type="EMBL" id="BX640443">
    <property type="protein sequence ID" value="CAE32635.1"/>
    <property type="molecule type" value="Genomic_DNA"/>
</dbReference>
<dbReference type="RefSeq" id="WP_010926391.1">
    <property type="nucleotide sequence ID" value="NC_002927.3"/>
</dbReference>
<dbReference type="SMR" id="Q7WKG8"/>
<dbReference type="KEGG" id="bbr:BB2139"/>
<dbReference type="eggNOG" id="COG0135">
    <property type="taxonomic scope" value="Bacteria"/>
</dbReference>
<dbReference type="HOGENOM" id="CLU_076364_2_0_4"/>
<dbReference type="UniPathway" id="UPA00035">
    <property type="reaction ID" value="UER00042"/>
</dbReference>
<dbReference type="Proteomes" id="UP000001027">
    <property type="component" value="Chromosome"/>
</dbReference>
<dbReference type="GO" id="GO:0004640">
    <property type="term" value="F:phosphoribosylanthranilate isomerase activity"/>
    <property type="evidence" value="ECO:0007669"/>
    <property type="project" value="UniProtKB-UniRule"/>
</dbReference>
<dbReference type="GO" id="GO:0000162">
    <property type="term" value="P:L-tryptophan biosynthetic process"/>
    <property type="evidence" value="ECO:0007669"/>
    <property type="project" value="UniProtKB-UniRule"/>
</dbReference>
<dbReference type="CDD" id="cd00405">
    <property type="entry name" value="PRAI"/>
    <property type="match status" value="1"/>
</dbReference>
<dbReference type="Gene3D" id="3.20.20.70">
    <property type="entry name" value="Aldolase class I"/>
    <property type="match status" value="1"/>
</dbReference>
<dbReference type="HAMAP" id="MF_00135">
    <property type="entry name" value="PRAI"/>
    <property type="match status" value="1"/>
</dbReference>
<dbReference type="InterPro" id="IPR013785">
    <property type="entry name" value="Aldolase_TIM"/>
</dbReference>
<dbReference type="InterPro" id="IPR001240">
    <property type="entry name" value="PRAI_dom"/>
</dbReference>
<dbReference type="InterPro" id="IPR011060">
    <property type="entry name" value="RibuloseP-bd_barrel"/>
</dbReference>
<dbReference type="InterPro" id="IPR044643">
    <property type="entry name" value="TrpF_fam"/>
</dbReference>
<dbReference type="NCBIfam" id="NF002298">
    <property type="entry name" value="PRK01222.1-4"/>
    <property type="match status" value="1"/>
</dbReference>
<dbReference type="PANTHER" id="PTHR42894">
    <property type="entry name" value="N-(5'-PHOSPHORIBOSYL)ANTHRANILATE ISOMERASE"/>
    <property type="match status" value="1"/>
</dbReference>
<dbReference type="PANTHER" id="PTHR42894:SF1">
    <property type="entry name" value="N-(5'-PHOSPHORIBOSYL)ANTHRANILATE ISOMERASE"/>
    <property type="match status" value="1"/>
</dbReference>
<dbReference type="Pfam" id="PF00697">
    <property type="entry name" value="PRAI"/>
    <property type="match status" value="1"/>
</dbReference>
<dbReference type="SUPFAM" id="SSF51366">
    <property type="entry name" value="Ribulose-phoshate binding barrel"/>
    <property type="match status" value="1"/>
</dbReference>
<name>TRPF_BORBR</name>
<feature type="chain" id="PRO_1000076430" description="N-(5'-phosphoribosyl)anthranilate isomerase">
    <location>
        <begin position="1"/>
        <end position="218"/>
    </location>
</feature>
<evidence type="ECO:0000255" key="1">
    <source>
        <dbReference type="HAMAP-Rule" id="MF_00135"/>
    </source>
</evidence>
<protein>
    <recommendedName>
        <fullName evidence="1">N-(5'-phosphoribosyl)anthranilate isomerase</fullName>
        <shortName evidence="1">PRAI</shortName>
        <ecNumber evidence="1">5.3.1.24</ecNumber>
    </recommendedName>
</protein>
<comment type="catalytic activity">
    <reaction evidence="1">
        <text>N-(5-phospho-beta-D-ribosyl)anthranilate = 1-(2-carboxyphenylamino)-1-deoxy-D-ribulose 5-phosphate</text>
        <dbReference type="Rhea" id="RHEA:21540"/>
        <dbReference type="ChEBI" id="CHEBI:18277"/>
        <dbReference type="ChEBI" id="CHEBI:58613"/>
        <dbReference type="EC" id="5.3.1.24"/>
    </reaction>
</comment>
<comment type="pathway">
    <text evidence="1">Amino-acid biosynthesis; L-tryptophan biosynthesis; L-tryptophan from chorismate: step 3/5.</text>
</comment>
<comment type="similarity">
    <text evidence="1">Belongs to the TrpF family.</text>
</comment>
<gene>
    <name evidence="1" type="primary">trpF</name>
    <name type="ordered locus">BB2139</name>
</gene>